<proteinExistence type="inferred from homology"/>
<name>SYD_LEUMM</name>
<dbReference type="EC" id="6.1.1.12" evidence="1"/>
<dbReference type="EMBL" id="CP000414">
    <property type="protein sequence ID" value="ABJ62405.1"/>
    <property type="molecule type" value="Genomic_DNA"/>
</dbReference>
<dbReference type="RefSeq" id="WP_011680019.1">
    <property type="nucleotide sequence ID" value="NC_008531.1"/>
</dbReference>
<dbReference type="SMR" id="Q03WL7"/>
<dbReference type="EnsemblBacteria" id="ABJ62405">
    <property type="protein sequence ID" value="ABJ62405"/>
    <property type="gene ID" value="LEUM_1309"/>
</dbReference>
<dbReference type="GeneID" id="29576140"/>
<dbReference type="KEGG" id="lme:LEUM_1309"/>
<dbReference type="eggNOG" id="COG0173">
    <property type="taxonomic scope" value="Bacteria"/>
</dbReference>
<dbReference type="HOGENOM" id="CLU_014330_3_2_9"/>
<dbReference type="Proteomes" id="UP000000362">
    <property type="component" value="Chromosome"/>
</dbReference>
<dbReference type="GO" id="GO:0005737">
    <property type="term" value="C:cytoplasm"/>
    <property type="evidence" value="ECO:0007669"/>
    <property type="project" value="UniProtKB-SubCell"/>
</dbReference>
<dbReference type="GO" id="GO:0004815">
    <property type="term" value="F:aspartate-tRNA ligase activity"/>
    <property type="evidence" value="ECO:0007669"/>
    <property type="project" value="UniProtKB-UniRule"/>
</dbReference>
<dbReference type="GO" id="GO:0005524">
    <property type="term" value="F:ATP binding"/>
    <property type="evidence" value="ECO:0007669"/>
    <property type="project" value="UniProtKB-UniRule"/>
</dbReference>
<dbReference type="GO" id="GO:0140096">
    <property type="term" value="F:catalytic activity, acting on a protein"/>
    <property type="evidence" value="ECO:0007669"/>
    <property type="project" value="UniProtKB-ARBA"/>
</dbReference>
<dbReference type="GO" id="GO:0003676">
    <property type="term" value="F:nucleic acid binding"/>
    <property type="evidence" value="ECO:0007669"/>
    <property type="project" value="InterPro"/>
</dbReference>
<dbReference type="GO" id="GO:0016740">
    <property type="term" value="F:transferase activity"/>
    <property type="evidence" value="ECO:0007669"/>
    <property type="project" value="UniProtKB-ARBA"/>
</dbReference>
<dbReference type="GO" id="GO:0006422">
    <property type="term" value="P:aspartyl-tRNA aminoacylation"/>
    <property type="evidence" value="ECO:0007669"/>
    <property type="project" value="UniProtKB-UniRule"/>
</dbReference>
<dbReference type="CDD" id="cd00777">
    <property type="entry name" value="AspRS_core"/>
    <property type="match status" value="1"/>
</dbReference>
<dbReference type="CDD" id="cd04317">
    <property type="entry name" value="EcAspRS_like_N"/>
    <property type="match status" value="1"/>
</dbReference>
<dbReference type="Gene3D" id="3.30.930.10">
    <property type="entry name" value="Bira Bifunctional Protein, Domain 2"/>
    <property type="match status" value="1"/>
</dbReference>
<dbReference type="Gene3D" id="3.30.1360.30">
    <property type="entry name" value="GAD-like domain"/>
    <property type="match status" value="1"/>
</dbReference>
<dbReference type="Gene3D" id="2.40.50.140">
    <property type="entry name" value="Nucleic acid-binding proteins"/>
    <property type="match status" value="1"/>
</dbReference>
<dbReference type="HAMAP" id="MF_00044">
    <property type="entry name" value="Asp_tRNA_synth_type1"/>
    <property type="match status" value="1"/>
</dbReference>
<dbReference type="InterPro" id="IPR004364">
    <property type="entry name" value="Aa-tRNA-synt_II"/>
</dbReference>
<dbReference type="InterPro" id="IPR006195">
    <property type="entry name" value="aa-tRNA-synth_II"/>
</dbReference>
<dbReference type="InterPro" id="IPR045864">
    <property type="entry name" value="aa-tRNA-synth_II/BPL/LPL"/>
</dbReference>
<dbReference type="InterPro" id="IPR004524">
    <property type="entry name" value="Asp-tRNA-ligase_1"/>
</dbReference>
<dbReference type="InterPro" id="IPR047089">
    <property type="entry name" value="Asp-tRNA-ligase_1_N"/>
</dbReference>
<dbReference type="InterPro" id="IPR002312">
    <property type="entry name" value="Asp/Asn-tRNA-synth_IIb"/>
</dbReference>
<dbReference type="InterPro" id="IPR047090">
    <property type="entry name" value="AspRS_core"/>
</dbReference>
<dbReference type="InterPro" id="IPR004115">
    <property type="entry name" value="GAD-like_sf"/>
</dbReference>
<dbReference type="InterPro" id="IPR029351">
    <property type="entry name" value="GAD_dom"/>
</dbReference>
<dbReference type="InterPro" id="IPR012340">
    <property type="entry name" value="NA-bd_OB-fold"/>
</dbReference>
<dbReference type="InterPro" id="IPR004365">
    <property type="entry name" value="NA-bd_OB_tRNA"/>
</dbReference>
<dbReference type="NCBIfam" id="TIGR00459">
    <property type="entry name" value="aspS_bact"/>
    <property type="match status" value="1"/>
</dbReference>
<dbReference type="NCBIfam" id="NF001750">
    <property type="entry name" value="PRK00476.1"/>
    <property type="match status" value="1"/>
</dbReference>
<dbReference type="PANTHER" id="PTHR22594:SF5">
    <property type="entry name" value="ASPARTATE--TRNA LIGASE, MITOCHONDRIAL"/>
    <property type="match status" value="1"/>
</dbReference>
<dbReference type="PANTHER" id="PTHR22594">
    <property type="entry name" value="ASPARTYL/LYSYL-TRNA SYNTHETASE"/>
    <property type="match status" value="1"/>
</dbReference>
<dbReference type="Pfam" id="PF02938">
    <property type="entry name" value="GAD"/>
    <property type="match status" value="1"/>
</dbReference>
<dbReference type="Pfam" id="PF00152">
    <property type="entry name" value="tRNA-synt_2"/>
    <property type="match status" value="1"/>
</dbReference>
<dbReference type="Pfam" id="PF01336">
    <property type="entry name" value="tRNA_anti-codon"/>
    <property type="match status" value="1"/>
</dbReference>
<dbReference type="PRINTS" id="PR01042">
    <property type="entry name" value="TRNASYNTHASP"/>
</dbReference>
<dbReference type="SUPFAM" id="SSF55681">
    <property type="entry name" value="Class II aaRS and biotin synthetases"/>
    <property type="match status" value="1"/>
</dbReference>
<dbReference type="SUPFAM" id="SSF55261">
    <property type="entry name" value="GAD domain-like"/>
    <property type="match status" value="1"/>
</dbReference>
<dbReference type="SUPFAM" id="SSF50249">
    <property type="entry name" value="Nucleic acid-binding proteins"/>
    <property type="match status" value="1"/>
</dbReference>
<dbReference type="PROSITE" id="PS50862">
    <property type="entry name" value="AA_TRNA_LIGASE_II"/>
    <property type="match status" value="1"/>
</dbReference>
<reference key="1">
    <citation type="journal article" date="2006" name="Proc. Natl. Acad. Sci. U.S.A.">
        <title>Comparative genomics of the lactic acid bacteria.</title>
        <authorList>
            <person name="Makarova K.S."/>
            <person name="Slesarev A."/>
            <person name="Wolf Y.I."/>
            <person name="Sorokin A."/>
            <person name="Mirkin B."/>
            <person name="Koonin E.V."/>
            <person name="Pavlov A."/>
            <person name="Pavlova N."/>
            <person name="Karamychev V."/>
            <person name="Polouchine N."/>
            <person name="Shakhova V."/>
            <person name="Grigoriev I."/>
            <person name="Lou Y."/>
            <person name="Rohksar D."/>
            <person name="Lucas S."/>
            <person name="Huang K."/>
            <person name="Goodstein D.M."/>
            <person name="Hawkins T."/>
            <person name="Plengvidhya V."/>
            <person name="Welker D."/>
            <person name="Hughes J."/>
            <person name="Goh Y."/>
            <person name="Benson A."/>
            <person name="Baldwin K."/>
            <person name="Lee J.-H."/>
            <person name="Diaz-Muniz I."/>
            <person name="Dosti B."/>
            <person name="Smeianov V."/>
            <person name="Wechter W."/>
            <person name="Barabote R."/>
            <person name="Lorca G."/>
            <person name="Altermann E."/>
            <person name="Barrangou R."/>
            <person name="Ganesan B."/>
            <person name="Xie Y."/>
            <person name="Rawsthorne H."/>
            <person name="Tamir D."/>
            <person name="Parker C."/>
            <person name="Breidt F."/>
            <person name="Broadbent J.R."/>
            <person name="Hutkins R."/>
            <person name="O'Sullivan D."/>
            <person name="Steele J."/>
            <person name="Unlu G."/>
            <person name="Saier M.H. Jr."/>
            <person name="Klaenhammer T."/>
            <person name="Richardson P."/>
            <person name="Kozyavkin S."/>
            <person name="Weimer B.C."/>
            <person name="Mills D.A."/>
        </authorList>
    </citation>
    <scope>NUCLEOTIDE SEQUENCE [LARGE SCALE GENOMIC DNA]</scope>
    <source>
        <strain>ATCC 8293 / DSM 20343 / BCRC 11652 / CCM 1803 / JCM 6124 / NCDO 523 / NBRC 100496 / NCIMB 8023 / NCTC 12954 / NRRL B-1118 / 37Y</strain>
    </source>
</reference>
<protein>
    <recommendedName>
        <fullName evidence="1">Aspartate--tRNA ligase</fullName>
        <ecNumber evidence="1">6.1.1.12</ecNumber>
    </recommendedName>
    <alternativeName>
        <fullName evidence="1">Aspartyl-tRNA synthetase</fullName>
        <shortName evidence="1">AspRS</shortName>
    </alternativeName>
</protein>
<evidence type="ECO:0000255" key="1">
    <source>
        <dbReference type="HAMAP-Rule" id="MF_00044"/>
    </source>
</evidence>
<sequence length="591" mass="66710">MKRTNYAGLIDETYLNQTVTLTGWVQKRRDFGDLIFVDLRDREGIVQLTFNATNADALAVAEKVRSEYVLKITGHVIERAENQINTKIKSGTIEVDVTEAEILSTSKTPPFYIEDDVNANEELKLQYRYLDLRRPEMQKNLRIRSKIMSSAMHFMDTHDFINIETPVLAKSTPEGARDYLVPSRVFPGSFYALPQSPQLFKQLLMGAGFDRYFQIARAFRDEDLRGDRQPEFTQMDVETSFMTADEIRELVNAWVKAMMHDVVDFDLDTAEIPTLTWQESMDRFGTDKPDLRIAYEIKDLSETVKNSEFGVFANAIKGGGVVKALAVPGGADHYSRKDIDKLTKYIERFGAKGLAWMKVAPEGLTGPIAKFFDDEAQAALIASADAQVGDLLLFGAGRADVVSATLDYLRRETAKALDLIDQTNPWAFAWIVDWPLFEYSEDFDRWIAAHHPFTMPNEEDLHYLNDGEDPHKAHAQSYDLVLNGYELGSGSIRIHRMDIQEKMLKALGFTPEKAHEAFGFLLEGMEYGFPPMGGIALGLDRLAMLLAGQENIREVIAFPKNSRATEPMTEAPTRVEGKQLNELGLFVPEAE</sequence>
<accession>Q03WL7</accession>
<organism>
    <name type="scientific">Leuconostoc mesenteroides subsp. mesenteroides (strain ATCC 8293 / DSM 20343 / BCRC 11652 / CCM 1803 / JCM 6124 / NCDO 523 / NBRC 100496 / NCIMB 8023 / NCTC 12954 / NRRL B-1118 / 37Y)</name>
    <dbReference type="NCBI Taxonomy" id="203120"/>
    <lineage>
        <taxon>Bacteria</taxon>
        <taxon>Bacillati</taxon>
        <taxon>Bacillota</taxon>
        <taxon>Bacilli</taxon>
        <taxon>Lactobacillales</taxon>
        <taxon>Lactobacillaceae</taxon>
        <taxon>Leuconostoc</taxon>
    </lineage>
</organism>
<comment type="function">
    <text evidence="1">Catalyzes the attachment of L-aspartate to tRNA(Asp) in a two-step reaction: L-aspartate is first activated by ATP to form Asp-AMP and then transferred to the acceptor end of tRNA(Asp).</text>
</comment>
<comment type="catalytic activity">
    <reaction evidence="1">
        <text>tRNA(Asp) + L-aspartate + ATP = L-aspartyl-tRNA(Asp) + AMP + diphosphate</text>
        <dbReference type="Rhea" id="RHEA:19649"/>
        <dbReference type="Rhea" id="RHEA-COMP:9660"/>
        <dbReference type="Rhea" id="RHEA-COMP:9678"/>
        <dbReference type="ChEBI" id="CHEBI:29991"/>
        <dbReference type="ChEBI" id="CHEBI:30616"/>
        <dbReference type="ChEBI" id="CHEBI:33019"/>
        <dbReference type="ChEBI" id="CHEBI:78442"/>
        <dbReference type="ChEBI" id="CHEBI:78516"/>
        <dbReference type="ChEBI" id="CHEBI:456215"/>
        <dbReference type="EC" id="6.1.1.12"/>
    </reaction>
</comment>
<comment type="subunit">
    <text evidence="1">Homodimer.</text>
</comment>
<comment type="subcellular location">
    <subcellularLocation>
        <location evidence="1">Cytoplasm</location>
    </subcellularLocation>
</comment>
<comment type="similarity">
    <text evidence="1">Belongs to the class-II aminoacyl-tRNA synthetase family. Type 1 subfamily.</text>
</comment>
<feature type="chain" id="PRO_1000006695" description="Aspartate--tRNA ligase">
    <location>
        <begin position="1"/>
        <end position="591"/>
    </location>
</feature>
<feature type="region of interest" description="Aspartate" evidence="1">
    <location>
        <begin position="198"/>
        <end position="201"/>
    </location>
</feature>
<feature type="binding site" evidence="1">
    <location>
        <position position="174"/>
    </location>
    <ligand>
        <name>L-aspartate</name>
        <dbReference type="ChEBI" id="CHEBI:29991"/>
    </ligand>
</feature>
<feature type="binding site" evidence="1">
    <location>
        <begin position="220"/>
        <end position="222"/>
    </location>
    <ligand>
        <name>ATP</name>
        <dbReference type="ChEBI" id="CHEBI:30616"/>
    </ligand>
</feature>
<feature type="binding site" evidence="1">
    <location>
        <position position="220"/>
    </location>
    <ligand>
        <name>L-aspartate</name>
        <dbReference type="ChEBI" id="CHEBI:29991"/>
    </ligand>
</feature>
<feature type="binding site" evidence="1">
    <location>
        <position position="229"/>
    </location>
    <ligand>
        <name>ATP</name>
        <dbReference type="ChEBI" id="CHEBI:30616"/>
    </ligand>
</feature>
<feature type="binding site" evidence="1">
    <location>
        <position position="450"/>
    </location>
    <ligand>
        <name>L-aspartate</name>
        <dbReference type="ChEBI" id="CHEBI:29991"/>
    </ligand>
</feature>
<feature type="binding site" evidence="1">
    <location>
        <position position="486"/>
    </location>
    <ligand>
        <name>ATP</name>
        <dbReference type="ChEBI" id="CHEBI:30616"/>
    </ligand>
</feature>
<feature type="binding site" evidence="1">
    <location>
        <position position="493"/>
    </location>
    <ligand>
        <name>L-aspartate</name>
        <dbReference type="ChEBI" id="CHEBI:29991"/>
    </ligand>
</feature>
<feature type="binding site" evidence="1">
    <location>
        <begin position="538"/>
        <end position="541"/>
    </location>
    <ligand>
        <name>ATP</name>
        <dbReference type="ChEBI" id="CHEBI:30616"/>
    </ligand>
</feature>
<keyword id="KW-0030">Aminoacyl-tRNA synthetase</keyword>
<keyword id="KW-0067">ATP-binding</keyword>
<keyword id="KW-0963">Cytoplasm</keyword>
<keyword id="KW-0436">Ligase</keyword>
<keyword id="KW-0547">Nucleotide-binding</keyword>
<keyword id="KW-0648">Protein biosynthesis</keyword>
<keyword id="KW-1185">Reference proteome</keyword>
<gene>
    <name evidence="1" type="primary">aspS</name>
    <name type="ordered locus">LEUM_1309</name>
</gene>